<keyword id="KW-0067">ATP-binding</keyword>
<keyword id="KW-0238">DNA-binding</keyword>
<keyword id="KW-0479">Metal-binding</keyword>
<keyword id="KW-0547">Nucleotide-binding</keyword>
<keyword id="KW-1185">Reference proteome</keyword>
<keyword id="KW-0678">Repressor</keyword>
<keyword id="KW-0804">Transcription</keyword>
<keyword id="KW-0805">Transcription regulation</keyword>
<keyword id="KW-0862">Zinc</keyword>
<keyword id="KW-0863">Zinc-finger</keyword>
<comment type="function">
    <text evidence="1">Negatively regulates transcription of bacterial ribonucleotide reductase nrd genes and operons by binding to NrdR-boxes.</text>
</comment>
<comment type="cofactor">
    <cofactor evidence="1">
        <name>Zn(2+)</name>
        <dbReference type="ChEBI" id="CHEBI:29105"/>
    </cofactor>
    <text evidence="1">Binds 1 zinc ion.</text>
</comment>
<comment type="similarity">
    <text evidence="1">Belongs to the NrdR family.</text>
</comment>
<proteinExistence type="inferred from homology"/>
<name>NRDR_BRASO</name>
<organism>
    <name type="scientific">Bradyrhizobium sp. (strain ORS 278)</name>
    <dbReference type="NCBI Taxonomy" id="114615"/>
    <lineage>
        <taxon>Bacteria</taxon>
        <taxon>Pseudomonadati</taxon>
        <taxon>Pseudomonadota</taxon>
        <taxon>Alphaproteobacteria</taxon>
        <taxon>Hyphomicrobiales</taxon>
        <taxon>Nitrobacteraceae</taxon>
        <taxon>Bradyrhizobium</taxon>
    </lineage>
</organism>
<accession>A4YW96</accession>
<feature type="chain" id="PRO_1000080716" description="Transcriptional repressor NrdR">
    <location>
        <begin position="1"/>
        <end position="161"/>
    </location>
</feature>
<feature type="domain" description="ATP-cone" evidence="1">
    <location>
        <begin position="49"/>
        <end position="139"/>
    </location>
</feature>
<feature type="zinc finger region" evidence="1">
    <location>
        <begin position="3"/>
        <end position="34"/>
    </location>
</feature>
<feature type="region of interest" description="Disordered" evidence="2">
    <location>
        <begin position="1"/>
        <end position="20"/>
    </location>
</feature>
<feature type="compositionally biased region" description="Polar residues" evidence="2">
    <location>
        <begin position="1"/>
        <end position="11"/>
    </location>
</feature>
<dbReference type="EMBL" id="CU234118">
    <property type="protein sequence ID" value="CAL78172.1"/>
    <property type="molecule type" value="Genomic_DNA"/>
</dbReference>
<dbReference type="RefSeq" id="WP_011927287.1">
    <property type="nucleotide sequence ID" value="NC_009445.1"/>
</dbReference>
<dbReference type="SMR" id="A4YW96"/>
<dbReference type="STRING" id="114615.BRADO4429"/>
<dbReference type="KEGG" id="bra:BRADO4429"/>
<dbReference type="eggNOG" id="COG1327">
    <property type="taxonomic scope" value="Bacteria"/>
</dbReference>
<dbReference type="HOGENOM" id="CLU_108412_0_1_5"/>
<dbReference type="OrthoDB" id="9807461at2"/>
<dbReference type="Proteomes" id="UP000001994">
    <property type="component" value="Chromosome"/>
</dbReference>
<dbReference type="GO" id="GO:0005524">
    <property type="term" value="F:ATP binding"/>
    <property type="evidence" value="ECO:0007669"/>
    <property type="project" value="UniProtKB-KW"/>
</dbReference>
<dbReference type="GO" id="GO:0003677">
    <property type="term" value="F:DNA binding"/>
    <property type="evidence" value="ECO:0007669"/>
    <property type="project" value="UniProtKB-KW"/>
</dbReference>
<dbReference type="GO" id="GO:0008270">
    <property type="term" value="F:zinc ion binding"/>
    <property type="evidence" value="ECO:0007669"/>
    <property type="project" value="UniProtKB-UniRule"/>
</dbReference>
<dbReference type="GO" id="GO:0045892">
    <property type="term" value="P:negative regulation of DNA-templated transcription"/>
    <property type="evidence" value="ECO:0007669"/>
    <property type="project" value="UniProtKB-UniRule"/>
</dbReference>
<dbReference type="HAMAP" id="MF_00440">
    <property type="entry name" value="NrdR"/>
    <property type="match status" value="1"/>
</dbReference>
<dbReference type="InterPro" id="IPR005144">
    <property type="entry name" value="ATP-cone_dom"/>
</dbReference>
<dbReference type="InterPro" id="IPR055173">
    <property type="entry name" value="NrdR-like_N"/>
</dbReference>
<dbReference type="InterPro" id="IPR003796">
    <property type="entry name" value="RNR_NrdR-like"/>
</dbReference>
<dbReference type="NCBIfam" id="TIGR00244">
    <property type="entry name" value="transcriptional regulator NrdR"/>
    <property type="match status" value="1"/>
</dbReference>
<dbReference type="PANTHER" id="PTHR30455">
    <property type="entry name" value="TRANSCRIPTIONAL REPRESSOR NRDR"/>
    <property type="match status" value="1"/>
</dbReference>
<dbReference type="PANTHER" id="PTHR30455:SF2">
    <property type="entry name" value="TRANSCRIPTIONAL REPRESSOR NRDR"/>
    <property type="match status" value="1"/>
</dbReference>
<dbReference type="Pfam" id="PF03477">
    <property type="entry name" value="ATP-cone"/>
    <property type="match status" value="1"/>
</dbReference>
<dbReference type="Pfam" id="PF22811">
    <property type="entry name" value="Zn_ribbon_NrdR"/>
    <property type="match status" value="1"/>
</dbReference>
<dbReference type="PROSITE" id="PS51161">
    <property type="entry name" value="ATP_CONE"/>
    <property type="match status" value="1"/>
</dbReference>
<protein>
    <recommendedName>
        <fullName evidence="1">Transcriptional repressor NrdR</fullName>
    </recommendedName>
</protein>
<evidence type="ECO:0000255" key="1">
    <source>
        <dbReference type="HAMAP-Rule" id="MF_00440"/>
    </source>
</evidence>
<evidence type="ECO:0000256" key="2">
    <source>
        <dbReference type="SAM" id="MobiDB-lite"/>
    </source>
</evidence>
<reference key="1">
    <citation type="journal article" date="2007" name="Science">
        <title>Legumes symbioses: absence of nod genes in photosynthetic bradyrhizobia.</title>
        <authorList>
            <person name="Giraud E."/>
            <person name="Moulin L."/>
            <person name="Vallenet D."/>
            <person name="Barbe V."/>
            <person name="Cytryn E."/>
            <person name="Avarre J.-C."/>
            <person name="Jaubert M."/>
            <person name="Simon D."/>
            <person name="Cartieaux F."/>
            <person name="Prin Y."/>
            <person name="Bena G."/>
            <person name="Hannibal L."/>
            <person name="Fardoux J."/>
            <person name="Kojadinovic M."/>
            <person name="Vuillet L."/>
            <person name="Lajus A."/>
            <person name="Cruveiller S."/>
            <person name="Rouy Z."/>
            <person name="Mangenot S."/>
            <person name="Segurens B."/>
            <person name="Dossat C."/>
            <person name="Franck W.L."/>
            <person name="Chang W.-S."/>
            <person name="Saunders E."/>
            <person name="Bruce D."/>
            <person name="Richardson P."/>
            <person name="Normand P."/>
            <person name="Dreyfus B."/>
            <person name="Pignol D."/>
            <person name="Stacey G."/>
            <person name="Emerich D."/>
            <person name="Vermeglio A."/>
            <person name="Medigue C."/>
            <person name="Sadowsky M."/>
        </authorList>
    </citation>
    <scope>NUCLEOTIDE SEQUENCE [LARGE SCALE GENOMIC DNA]</scope>
    <source>
        <strain>ORS 278</strain>
    </source>
</reference>
<sequence length="161" mass="18654">MRCPSCNSLDTQVKDSRPTEDSSVIRRRRVCVTCNFRFTTFERVQLRELTVIKRNGRRVPFDRDKLMRSVQISLRKRSVDPERVEKMVSAIVRELESGGESEVSSEAIGEIVMEHLRDLDDVAYVRFASVYRNFREAKDFEAVLGELSAEDETPRLAPVRK</sequence>
<gene>
    <name evidence="1" type="primary">nrdR</name>
    <name type="ordered locus">BRADO4429</name>
</gene>